<feature type="chain" id="PRO_1000096888" description="Probable endonuclease 4">
    <location>
        <begin position="1"/>
        <end position="284"/>
    </location>
</feature>
<feature type="binding site" evidence="1">
    <location>
        <position position="69"/>
    </location>
    <ligand>
        <name>Zn(2+)</name>
        <dbReference type="ChEBI" id="CHEBI:29105"/>
        <label>1</label>
    </ligand>
</feature>
<feature type="binding site" evidence="1">
    <location>
        <position position="109"/>
    </location>
    <ligand>
        <name>Zn(2+)</name>
        <dbReference type="ChEBI" id="CHEBI:29105"/>
        <label>1</label>
    </ligand>
</feature>
<feature type="binding site" evidence="1">
    <location>
        <position position="145"/>
    </location>
    <ligand>
        <name>Zn(2+)</name>
        <dbReference type="ChEBI" id="CHEBI:29105"/>
        <label>1</label>
    </ligand>
</feature>
<feature type="binding site" evidence="1">
    <location>
        <position position="145"/>
    </location>
    <ligand>
        <name>Zn(2+)</name>
        <dbReference type="ChEBI" id="CHEBI:29105"/>
        <label>2</label>
    </ligand>
</feature>
<feature type="binding site" evidence="1">
    <location>
        <position position="179"/>
    </location>
    <ligand>
        <name>Zn(2+)</name>
        <dbReference type="ChEBI" id="CHEBI:29105"/>
        <label>2</label>
    </ligand>
</feature>
<feature type="binding site" evidence="1">
    <location>
        <position position="182"/>
    </location>
    <ligand>
        <name>Zn(2+)</name>
        <dbReference type="ChEBI" id="CHEBI:29105"/>
        <label>3</label>
    </ligand>
</feature>
<feature type="binding site" evidence="1">
    <location>
        <position position="216"/>
    </location>
    <ligand>
        <name>Zn(2+)</name>
        <dbReference type="ChEBI" id="CHEBI:29105"/>
        <label>2</label>
    </ligand>
</feature>
<feature type="binding site" evidence="1">
    <location>
        <position position="229"/>
    </location>
    <ligand>
        <name>Zn(2+)</name>
        <dbReference type="ChEBI" id="CHEBI:29105"/>
        <label>3</label>
    </ligand>
</feature>
<feature type="binding site" evidence="1">
    <location>
        <position position="231"/>
    </location>
    <ligand>
        <name>Zn(2+)</name>
        <dbReference type="ChEBI" id="CHEBI:29105"/>
        <label>3</label>
    </ligand>
</feature>
<feature type="binding site" evidence="1">
    <location>
        <position position="261"/>
    </location>
    <ligand>
        <name>Zn(2+)</name>
        <dbReference type="ChEBI" id="CHEBI:29105"/>
        <label>2</label>
    </ligand>
</feature>
<evidence type="ECO:0000255" key="1">
    <source>
        <dbReference type="HAMAP-Rule" id="MF_00152"/>
    </source>
</evidence>
<protein>
    <recommendedName>
        <fullName evidence="1">Probable endonuclease 4</fullName>
        <ecNumber evidence="1">3.1.21.2</ecNumber>
    </recommendedName>
    <alternativeName>
        <fullName evidence="1">Endodeoxyribonuclease IV</fullName>
    </alternativeName>
    <alternativeName>
        <fullName evidence="1">Endonuclease IV</fullName>
    </alternativeName>
</protein>
<proteinExistence type="inferred from homology"/>
<accession>B5XP51</accession>
<keyword id="KW-0227">DNA damage</keyword>
<keyword id="KW-0234">DNA repair</keyword>
<keyword id="KW-0255">Endonuclease</keyword>
<keyword id="KW-0378">Hydrolase</keyword>
<keyword id="KW-0479">Metal-binding</keyword>
<keyword id="KW-0540">Nuclease</keyword>
<keyword id="KW-0862">Zinc</keyword>
<name>END4_KLEP3</name>
<dbReference type="EC" id="3.1.21.2" evidence="1"/>
<dbReference type="EMBL" id="CP000964">
    <property type="protein sequence ID" value="ACI09613.1"/>
    <property type="molecule type" value="Genomic_DNA"/>
</dbReference>
<dbReference type="SMR" id="B5XP51"/>
<dbReference type="KEGG" id="kpe:KPK_1569"/>
<dbReference type="HOGENOM" id="CLU_025885_0_4_6"/>
<dbReference type="Proteomes" id="UP000001734">
    <property type="component" value="Chromosome"/>
</dbReference>
<dbReference type="GO" id="GO:0008833">
    <property type="term" value="F:deoxyribonuclease IV (phage-T4-induced) activity"/>
    <property type="evidence" value="ECO:0007669"/>
    <property type="project" value="UniProtKB-UniRule"/>
</dbReference>
<dbReference type="GO" id="GO:0003677">
    <property type="term" value="F:DNA binding"/>
    <property type="evidence" value="ECO:0007669"/>
    <property type="project" value="InterPro"/>
</dbReference>
<dbReference type="GO" id="GO:0003906">
    <property type="term" value="F:DNA-(apurinic or apyrimidinic site) endonuclease activity"/>
    <property type="evidence" value="ECO:0007669"/>
    <property type="project" value="TreeGrafter"/>
</dbReference>
<dbReference type="GO" id="GO:0008081">
    <property type="term" value="F:phosphoric diester hydrolase activity"/>
    <property type="evidence" value="ECO:0007669"/>
    <property type="project" value="TreeGrafter"/>
</dbReference>
<dbReference type="GO" id="GO:0008270">
    <property type="term" value="F:zinc ion binding"/>
    <property type="evidence" value="ECO:0007669"/>
    <property type="project" value="UniProtKB-UniRule"/>
</dbReference>
<dbReference type="GO" id="GO:0006284">
    <property type="term" value="P:base-excision repair"/>
    <property type="evidence" value="ECO:0007669"/>
    <property type="project" value="TreeGrafter"/>
</dbReference>
<dbReference type="CDD" id="cd00019">
    <property type="entry name" value="AP2Ec"/>
    <property type="match status" value="1"/>
</dbReference>
<dbReference type="FunFam" id="3.20.20.150:FF:000001">
    <property type="entry name" value="Probable endonuclease 4"/>
    <property type="match status" value="1"/>
</dbReference>
<dbReference type="Gene3D" id="3.20.20.150">
    <property type="entry name" value="Divalent-metal-dependent TIM barrel enzymes"/>
    <property type="match status" value="1"/>
</dbReference>
<dbReference type="HAMAP" id="MF_00152">
    <property type="entry name" value="Nfo"/>
    <property type="match status" value="1"/>
</dbReference>
<dbReference type="InterPro" id="IPR001719">
    <property type="entry name" value="AP_endonuc_2"/>
</dbReference>
<dbReference type="InterPro" id="IPR018246">
    <property type="entry name" value="AP_endonuc_F2_Zn_BS"/>
</dbReference>
<dbReference type="InterPro" id="IPR036237">
    <property type="entry name" value="Xyl_isomerase-like_sf"/>
</dbReference>
<dbReference type="InterPro" id="IPR013022">
    <property type="entry name" value="Xyl_isomerase-like_TIM-brl"/>
</dbReference>
<dbReference type="NCBIfam" id="TIGR00587">
    <property type="entry name" value="nfo"/>
    <property type="match status" value="1"/>
</dbReference>
<dbReference type="NCBIfam" id="NF002199">
    <property type="entry name" value="PRK01060.1-4"/>
    <property type="match status" value="1"/>
</dbReference>
<dbReference type="PANTHER" id="PTHR21445:SF0">
    <property type="entry name" value="APURINIC-APYRIMIDINIC ENDONUCLEASE"/>
    <property type="match status" value="1"/>
</dbReference>
<dbReference type="PANTHER" id="PTHR21445">
    <property type="entry name" value="ENDONUCLEASE IV ENDODEOXYRIBONUCLEASE IV"/>
    <property type="match status" value="1"/>
</dbReference>
<dbReference type="Pfam" id="PF01261">
    <property type="entry name" value="AP_endonuc_2"/>
    <property type="match status" value="1"/>
</dbReference>
<dbReference type="SMART" id="SM00518">
    <property type="entry name" value="AP2Ec"/>
    <property type="match status" value="1"/>
</dbReference>
<dbReference type="SUPFAM" id="SSF51658">
    <property type="entry name" value="Xylose isomerase-like"/>
    <property type="match status" value="1"/>
</dbReference>
<dbReference type="PROSITE" id="PS00729">
    <property type="entry name" value="AP_NUCLEASE_F2_1"/>
    <property type="match status" value="1"/>
</dbReference>
<dbReference type="PROSITE" id="PS00730">
    <property type="entry name" value="AP_NUCLEASE_F2_2"/>
    <property type="match status" value="1"/>
</dbReference>
<dbReference type="PROSITE" id="PS00731">
    <property type="entry name" value="AP_NUCLEASE_F2_3"/>
    <property type="match status" value="1"/>
</dbReference>
<dbReference type="PROSITE" id="PS51432">
    <property type="entry name" value="AP_NUCLEASE_F2_4"/>
    <property type="match status" value="1"/>
</dbReference>
<reference key="1">
    <citation type="journal article" date="2008" name="PLoS Genet.">
        <title>Complete genome sequence of the N2-fixing broad host range endophyte Klebsiella pneumoniae 342 and virulence predictions verified in mice.</title>
        <authorList>
            <person name="Fouts D.E."/>
            <person name="Tyler H.L."/>
            <person name="DeBoy R.T."/>
            <person name="Daugherty S."/>
            <person name="Ren Q."/>
            <person name="Badger J.H."/>
            <person name="Durkin A.S."/>
            <person name="Huot H."/>
            <person name="Shrivastava S."/>
            <person name="Kothari S."/>
            <person name="Dodson R.J."/>
            <person name="Mohamoud Y."/>
            <person name="Khouri H."/>
            <person name="Roesch L.F.W."/>
            <person name="Krogfelt K.A."/>
            <person name="Struve C."/>
            <person name="Triplett E.W."/>
            <person name="Methe B.A."/>
        </authorList>
    </citation>
    <scope>NUCLEOTIDE SEQUENCE [LARGE SCALE GENOMIC DNA]</scope>
    <source>
        <strain>342</strain>
    </source>
</reference>
<organism>
    <name type="scientific">Klebsiella pneumoniae (strain 342)</name>
    <dbReference type="NCBI Taxonomy" id="507522"/>
    <lineage>
        <taxon>Bacteria</taxon>
        <taxon>Pseudomonadati</taxon>
        <taxon>Pseudomonadota</taxon>
        <taxon>Gammaproteobacteria</taxon>
        <taxon>Enterobacterales</taxon>
        <taxon>Enterobacteriaceae</taxon>
        <taxon>Klebsiella/Raoultella group</taxon>
        <taxon>Klebsiella</taxon>
        <taxon>Klebsiella pneumoniae complex</taxon>
    </lineage>
</organism>
<sequence>MKYVGAHVSASGGLANAAIRAAEIEATAFALFTKNQRQWRAAPLSDETIAEFKAACEKYHFGPGQILPHDSYLINLGHPVEEALEKSRDAFIDEMTRCQQLGLTLLNFHPGSHLQQIPEEACLARIAESINIALAKTEGVTAVIENTAGQGSNLGFKFEHLAAIIDGVEDKSRVGVCIDTCHAFAAGYDLRSAEACEKTFADFERIVGFQYLRGMHLNDAKSTFGSRVDRHHSLGEGNIGHDCFRWIMQDSRFNGIPLILETINPDIWAEEIAWLRAQQIAEVA</sequence>
<gene>
    <name evidence="1" type="primary">nfo</name>
    <name type="ordered locus">KPK_1569</name>
</gene>
<comment type="function">
    <text evidence="1">Endonuclease IV plays a role in DNA repair. It cleaves phosphodiester bonds at apurinic or apyrimidinic (AP) sites, generating a 3'-hydroxyl group and a 5'-terminal sugar phosphate.</text>
</comment>
<comment type="catalytic activity">
    <reaction evidence="1">
        <text>Endonucleolytic cleavage to 5'-phosphooligonucleotide end-products.</text>
        <dbReference type="EC" id="3.1.21.2"/>
    </reaction>
</comment>
<comment type="cofactor">
    <cofactor evidence="1">
        <name>Zn(2+)</name>
        <dbReference type="ChEBI" id="CHEBI:29105"/>
    </cofactor>
    <text evidence="1">Binds 3 Zn(2+) ions.</text>
</comment>
<comment type="similarity">
    <text evidence="1">Belongs to the AP endonuclease 2 family.</text>
</comment>